<evidence type="ECO:0000255" key="1">
    <source>
        <dbReference type="HAMAP-Rule" id="MF_04003"/>
    </source>
</evidence>
<name>VL2_HPV62</name>
<organismHost>
    <name type="scientific">Homo sapiens</name>
    <name type="common">Human</name>
    <dbReference type="NCBI Taxonomy" id="9606"/>
</organismHost>
<proteinExistence type="inferred from homology"/>
<dbReference type="EMBL" id="AY395706">
    <property type="protein sequence ID" value="AAR32251.1"/>
    <property type="molecule type" value="Genomic_DNA"/>
</dbReference>
<dbReference type="Proteomes" id="UP000102297">
    <property type="component" value="Genome"/>
</dbReference>
<dbReference type="GO" id="GO:0043657">
    <property type="term" value="C:host cell"/>
    <property type="evidence" value="ECO:0007669"/>
    <property type="project" value="GOC"/>
</dbReference>
<dbReference type="GO" id="GO:0044174">
    <property type="term" value="C:host cell endosome"/>
    <property type="evidence" value="ECO:0007669"/>
    <property type="project" value="UniProtKB-KW"/>
</dbReference>
<dbReference type="GO" id="GO:0044177">
    <property type="term" value="C:host cell Golgi apparatus"/>
    <property type="evidence" value="ECO:0007669"/>
    <property type="project" value="UniProtKB-SubCell"/>
</dbReference>
<dbReference type="GO" id="GO:0042025">
    <property type="term" value="C:host cell nucleus"/>
    <property type="evidence" value="ECO:0007669"/>
    <property type="project" value="UniProtKB-SubCell"/>
</dbReference>
<dbReference type="GO" id="GO:0019028">
    <property type="term" value="C:viral capsid"/>
    <property type="evidence" value="ECO:0007669"/>
    <property type="project" value="UniProtKB-UniRule"/>
</dbReference>
<dbReference type="GO" id="GO:0003677">
    <property type="term" value="F:DNA binding"/>
    <property type="evidence" value="ECO:0007669"/>
    <property type="project" value="UniProtKB-UniRule"/>
</dbReference>
<dbReference type="GO" id="GO:0005198">
    <property type="term" value="F:structural molecule activity"/>
    <property type="evidence" value="ECO:0007669"/>
    <property type="project" value="UniProtKB-UniRule"/>
</dbReference>
<dbReference type="GO" id="GO:0075521">
    <property type="term" value="P:microtubule-dependent intracellular transport of viral material towards nucleus"/>
    <property type="evidence" value="ECO:0007669"/>
    <property type="project" value="UniProtKB-UniRule"/>
</dbReference>
<dbReference type="GO" id="GO:0046718">
    <property type="term" value="P:symbiont entry into host cell"/>
    <property type="evidence" value="ECO:0007669"/>
    <property type="project" value="UniProtKB-KW"/>
</dbReference>
<dbReference type="GO" id="GO:0075732">
    <property type="term" value="P:viral penetration into host nucleus"/>
    <property type="evidence" value="ECO:0007669"/>
    <property type="project" value="UniProtKB-KW"/>
</dbReference>
<dbReference type="HAMAP" id="MF_04003">
    <property type="entry name" value="PPV_L2"/>
    <property type="match status" value="1"/>
</dbReference>
<dbReference type="InterPro" id="IPR000784">
    <property type="entry name" value="Late_L2"/>
</dbReference>
<dbReference type="Pfam" id="PF00513">
    <property type="entry name" value="Late_protein_L2"/>
    <property type="match status" value="1"/>
</dbReference>
<gene>
    <name evidence="1" type="primary">L2</name>
</gene>
<protein>
    <recommendedName>
        <fullName evidence="1">Minor capsid protein L2</fullName>
    </recommendedName>
</protein>
<accession>Q676U7</accession>
<keyword id="KW-0167">Capsid protein</keyword>
<keyword id="KW-1176">Cytoplasmic inwards viral transport</keyword>
<keyword id="KW-1015">Disulfide bond</keyword>
<keyword id="KW-0238">DNA-binding</keyword>
<keyword id="KW-1039">Host endosome</keyword>
<keyword id="KW-1040">Host Golgi apparatus</keyword>
<keyword id="KW-1048">Host nucleus</keyword>
<keyword id="KW-0945">Host-virus interaction</keyword>
<keyword id="KW-0426">Late protein</keyword>
<keyword id="KW-1177">Microtubular inwards viral transport</keyword>
<keyword id="KW-0597">Phosphoprotein</keyword>
<keyword id="KW-1185">Reference proteome</keyword>
<keyword id="KW-1163">Viral penetration into host nucleus</keyword>
<keyword id="KW-0946">Virion</keyword>
<keyword id="KW-1160">Virus entry into host cell</keyword>
<feature type="chain" id="PRO_0000133627" description="Minor capsid protein L2">
    <location>
        <begin position="1"/>
        <end position="475"/>
    </location>
</feature>
<feature type="short sequence motif" description="Nuclear localization signal" evidence="1">
    <location>
        <begin position="1"/>
        <end position="11"/>
    </location>
</feature>
<feature type="short sequence motif" description="Nuclear localization signal" evidence="1">
    <location>
        <begin position="455"/>
        <end position="463"/>
    </location>
</feature>
<feature type="disulfide bond" evidence="1">
    <location>
        <begin position="20"/>
        <end position="26"/>
    </location>
</feature>
<comment type="function">
    <text evidence="1">Minor protein of the capsid that localizes along the inner surface of the virion, within the central cavities beneath the L1 pentamers. Plays a role in capsid stabilization through interaction with the major capsid protein L1. Once the virion enters the host cell, L2 escorts the genomic DNA into the nucleus by promoting escape from the endosomal compartments and traffic through the host Golgi network. Mechanistically, the C-terminus of L2 possesses a cell-penetrating peptide that protudes from the host endosome, interacts with host cytoplasmic retromer cargo and thereby mediates the capsid delivery to the host trans-Golgi network. Plays a role through its interaction with host dynein in the intracellular microtubule-dependent transport of viral capsid toward the nucleus. Mediates the viral genome import into the nucleus through binding to host importins. Once within the nucleus, L2 localizes viral genomes to host PML bodies in order to activate early gene expression for establishment of infection. Later on, promotes late gene expression by interacting with the viral E2 protein and by inhibiting its transcriptional activation functions. During virion assembly, encapsidates the genome by direct interaction with the viral DNA.</text>
</comment>
<comment type="subunit">
    <text evidence="1">Interacts with major capsid protein L1. Interacts with E2; this interaction inhibits E2 transcriptional activity but not the DNA replication function E2. Interacts with host GADD45GIP1. Interacts with host HSPA8; this interaction is required for L2 nuclear translocation. Interacts with host importins KPNB2 and KPNB3. Forms a complex with importin alpha2-beta1 heterodimers via interaction with the importin alpha2 adapter. Interacts with host DYNLT1; this interaction is essential for virus intracellular transport during entry. Interacts (via C-terminus) with host retromer subunits VPS35 and VPS29.</text>
</comment>
<comment type="subcellular location">
    <subcellularLocation>
        <location evidence="1">Virion</location>
    </subcellularLocation>
    <subcellularLocation>
        <location evidence="1">Host nucleus</location>
    </subcellularLocation>
    <subcellularLocation>
        <location evidence="1">Host early endosome</location>
    </subcellularLocation>
    <subcellularLocation>
        <location evidence="1">Host Golgi apparatus</location>
    </subcellularLocation>
</comment>
<comment type="PTM">
    <text evidence="1">Highly phosphorylated.</text>
</comment>
<comment type="similarity">
    <text evidence="1">Belongs to the papillomaviridae L2 protein family.</text>
</comment>
<reference key="1">
    <citation type="journal article" date="2004" name="J. Infect. Dis.">
        <title>Codetection of a mixed population of candHPV62 containing wild-type and disrupted E1 open-reading frame in a 45-year-old woman with normal cytology.</title>
        <authorList>
            <person name="Fu L."/>
            <person name="Terai M."/>
            <person name="Matsukura T."/>
            <person name="Herrero R."/>
            <person name="Burk R.D."/>
        </authorList>
    </citation>
    <scope>NUCLEOTIDE SEQUENCE [GENOMIC DNA]</scope>
</reference>
<organism>
    <name type="scientific">Human papillomavirus 62</name>
    <dbReference type="NCBI Taxonomy" id="334210"/>
    <lineage>
        <taxon>Viruses</taxon>
        <taxon>Monodnaviria</taxon>
        <taxon>Shotokuvirae</taxon>
        <taxon>Cossaviricota</taxon>
        <taxon>Papovaviricetes</taxon>
        <taxon>Zurhausenvirales</taxon>
        <taxon>Papillomaviridae</taxon>
        <taxon>Firstpapillomavirinae</taxon>
        <taxon>Alphapapillomavirus</taxon>
        <taxon>Alphapapillomavirus 3</taxon>
    </lineage>
</organism>
<sequence>MPKVLHRRKRASATDLYRTCKVSGTCPSDVIPKVEGNTLADKILKWASLGVFFGGLGIGTASGTGGRTGYIPIGGRPPSVVDIGPVSRPPVVIEPVGATDPSIVTLVEDSSIIEAGAVHPNFTGSSGFEVTTSSTATPAVLDISPTGTTVQVSSTNFLNPAYTEPSIIDPPQTGELSGHVLTSTPTAGSHSYEEIPMVTFASNAGTGSEPISSTPLPGVRRVAGPRLGLYTKATQQVPVADPAFVSRPASFATFDNPIYDPEETIIFEHPSIYTPPDPDFLDIVTLHRPALTSRQGTVRLSRVGQRASLRTRSGKRIGARVHFYHDISPIPSTTTGDIELQPLLPSGSSSADTLYDVYADDQHLDAVLQSVPSMSSRPLVPSNATISATSVASSHTNVTVPLSTGLSVPASTGPDVELPQFSVPVSVLTPSFPATTPYSIYIVGSDYYLFPSYIFFPKKHKRLHYFFTDGYVAAW</sequence>